<dbReference type="EMBL" id="CY016239">
    <property type="protein sequence ID" value="ABI95265.1"/>
    <property type="molecule type" value="Other_RNA"/>
</dbReference>
<dbReference type="PDB" id="4NQX">
    <property type="method" value="X-ray"/>
    <property type="resolution" value="2.00 A"/>
    <property type="chains" value="M/N/O/P/Q/R=44-52"/>
</dbReference>
<dbReference type="PDBsum" id="4NQX"/>
<dbReference type="SMR" id="Q07FI1"/>
<dbReference type="EvolutionaryTrace" id="Q07FI1"/>
<dbReference type="PRO" id="PR:Q07FI1"/>
<dbReference type="Proteomes" id="UP000008586">
    <property type="component" value="Genome"/>
</dbReference>
<dbReference type="GO" id="GO:0019029">
    <property type="term" value="C:helical viral capsid"/>
    <property type="evidence" value="ECO:0007669"/>
    <property type="project" value="UniProtKB-UniRule"/>
</dbReference>
<dbReference type="GO" id="GO:0043657">
    <property type="term" value="C:host cell"/>
    <property type="evidence" value="ECO:0007669"/>
    <property type="project" value="GOC"/>
</dbReference>
<dbReference type="GO" id="GO:0042025">
    <property type="term" value="C:host cell nucleus"/>
    <property type="evidence" value="ECO:0007669"/>
    <property type="project" value="UniProtKB-SubCell"/>
</dbReference>
<dbReference type="GO" id="GO:1990904">
    <property type="term" value="C:ribonucleoprotein complex"/>
    <property type="evidence" value="ECO:0007669"/>
    <property type="project" value="UniProtKB-KW"/>
</dbReference>
<dbReference type="GO" id="GO:0019013">
    <property type="term" value="C:viral nucleocapsid"/>
    <property type="evidence" value="ECO:0007669"/>
    <property type="project" value="UniProtKB-UniRule"/>
</dbReference>
<dbReference type="GO" id="GO:0003723">
    <property type="term" value="F:RNA binding"/>
    <property type="evidence" value="ECO:0007669"/>
    <property type="project" value="UniProtKB-UniRule"/>
</dbReference>
<dbReference type="GO" id="GO:0005198">
    <property type="term" value="F:structural molecule activity"/>
    <property type="evidence" value="ECO:0007669"/>
    <property type="project" value="UniProtKB-UniRule"/>
</dbReference>
<dbReference type="GO" id="GO:0046718">
    <property type="term" value="P:symbiont entry into host cell"/>
    <property type="evidence" value="ECO:0007669"/>
    <property type="project" value="UniProtKB-KW"/>
</dbReference>
<dbReference type="GO" id="GO:0075732">
    <property type="term" value="P:viral penetration into host nucleus"/>
    <property type="evidence" value="ECO:0007669"/>
    <property type="project" value="UniProtKB-UniRule"/>
</dbReference>
<dbReference type="HAMAP" id="MF_04070">
    <property type="entry name" value="INFV_NCAP"/>
    <property type="match status" value="1"/>
</dbReference>
<dbReference type="InterPro" id="IPR002141">
    <property type="entry name" value="Flu_NP"/>
</dbReference>
<dbReference type="Pfam" id="PF00506">
    <property type="entry name" value="Flu_NP"/>
    <property type="match status" value="1"/>
</dbReference>
<dbReference type="SUPFAM" id="SSF161003">
    <property type="entry name" value="flu NP-like"/>
    <property type="match status" value="1"/>
</dbReference>
<feature type="chain" id="PRO_0000372944" description="Nucleoprotein">
    <location>
        <begin position="1"/>
        <end position="498"/>
    </location>
</feature>
<feature type="region of interest" description="Disordered" evidence="2">
    <location>
        <begin position="1"/>
        <end position="21"/>
    </location>
</feature>
<feature type="short sequence motif" description="Unconventional nuclear localization signal" evidence="1">
    <location>
        <begin position="1"/>
        <end position="18"/>
    </location>
</feature>
<feature type="short sequence motif" description="Bipartite nuclear localization signal" evidence="1">
    <location>
        <begin position="198"/>
        <end position="216"/>
    </location>
</feature>
<feature type="compositionally biased region" description="Basic and acidic residues" evidence="2">
    <location>
        <begin position="8"/>
        <end position="21"/>
    </location>
</feature>
<reference key="1">
    <citation type="submission" date="2006-09" db="EMBL/GenBank/DDBJ databases">
        <title>The NIAID influenza genome sequencing project.</title>
        <authorList>
            <person name="Ghedin E."/>
            <person name="Spiro D."/>
            <person name="Miller N."/>
            <person name="Zaborsky J."/>
            <person name="Feldblyum T."/>
            <person name="Subbu V."/>
            <person name="Shumway M."/>
            <person name="Sparenborg J."/>
            <person name="Groveman L."/>
            <person name="Halpin R."/>
            <person name="Sitz J."/>
            <person name="Koo H."/>
            <person name="Salzberg S.L."/>
            <person name="Webster R.G."/>
            <person name="Hoffmann E."/>
            <person name="Krauss S."/>
            <person name="Naeve C."/>
            <person name="Bao Y."/>
            <person name="Bolotov P."/>
            <person name="Dernovoy D."/>
            <person name="Kiryutin B."/>
            <person name="Lipman D.J."/>
            <person name="Tatusova T."/>
        </authorList>
    </citation>
    <scope>NUCLEOTIDE SEQUENCE [GENOMIC RNA]</scope>
</reference>
<reference key="2">
    <citation type="submission" date="2006-09" db="EMBL/GenBank/DDBJ databases">
        <authorList>
            <consortium name="The NIAID Influenza Genome Sequencing Consortium"/>
        </authorList>
    </citation>
    <scope>NUCLEOTIDE SEQUENCE [GENOMIC RNA]</scope>
</reference>
<gene>
    <name evidence="1" type="primary">NP</name>
</gene>
<sequence length="498" mass="55983">MASQGTKRSYEQMETDGERQNATEIRASVGRMIGGIGRFYIQMCTELKLNDYEGRLIQNSLTIERMVLSAFDERRNKYLEEHPSAGKDPKKTGGPIYKRVDGKWVRELVLYDKEEIRRIWRQANNGDDATAGLTHIMIWHSNLNDTTYQRTRALVRTGMDPRMCSLMQGSTLPRRSGAAGAAVKGVGTMVLELIRMIKRGINDRNFWRGENGRKTRIAYERMCNILKGKFQTAAQRAMMDQVRESRNPGNAEIEDLTFLARSALILRGSVAHKSCLPACVYGPAVASGYDFEKEGYSLVGVDPFKLLQTSQVYSLIRPNENPAHKSQLVWMACNSAAFEDLRVSSFIRGTRVLPRGKLSTRGVQIASNENMDAIVSSTLELRSRYWAIRTRSGGNTNQQRASAGQISTQPTFSVQRNLPFDKTTIMAAFTGNAEGRTSDMRAEIIKMMESARPEEVSFQGRGVFELSDERATNPIVPSFDMSNEGSYFFGDNAEEYDN</sequence>
<name>NCAP_I96A3</name>
<comment type="function">
    <text evidence="1">Encapsidates the negative strand viral RNA, protecting it from nucleases. The encapsidated genomic RNA is termed the ribonucleoprotein (RNP) and serves as template for transcription and replication. The RNP needs to be localized in the host nucleus to start an infectious cycle, but is too large to diffuse through the nuclear pore complex. NP comprises at least 2 nuclear localization signals that are responsible for the active RNP import into the nucleus through cellular importin alpha/beta pathway. Later in the infection, nclear export of RNPs are mediated through viral proteins NEP interacting with M1 which binds nucleoproteins. It is possible that nucleoprotein binds directly host exportin-1/XPO1 and plays an active role in RNPs nuclear export. M1 interaction with RNP seems to hide nucleoprotein's nuclear localization signals. Soon after a virion infects a new cell, M1 dissociates from the RNP under acidification of the virion driven by M2 protein. Dissociation of M1 from RNP unmasks nucleoprotein's nuclear localization signals, targeting the RNP to the nucleus.</text>
</comment>
<comment type="subunit">
    <text evidence="1">Homomultimerizes to form the nucleocapsid. May bind host exportin-1/XPO1. Binds to viral genomic RNA. Protein-RNA contacts are mediated by a combination of electrostatic interactions between positively charged residues and the phosphate backbone and planar interactions between aromatic side chains and bases.</text>
</comment>
<comment type="subcellular location">
    <subcellularLocation>
        <location evidence="1">Virion</location>
    </subcellularLocation>
    <subcellularLocation>
        <location evidence="1">Host nucleus</location>
    </subcellularLocation>
</comment>
<comment type="PTM">
    <text evidence="1">Late in virus-infected cells, may be cleaved from a 56-kDa protein to a 53-kDa protein by a cellular caspase. This cleavage might be a marker for the onset of apoptosis in infected cells or have a specific function in virus host interaction.</text>
</comment>
<comment type="similarity">
    <text evidence="1">Belongs to the influenza viruses nucleoprotein family.</text>
</comment>
<accession>Q07FI1</accession>
<proteinExistence type="evidence at protein level"/>
<organism>
    <name type="scientific">Influenza A virus (strain A/China:Nanchang/11/1996 H1N1)</name>
    <dbReference type="NCBI Taxonomy" id="394786"/>
    <lineage>
        <taxon>Viruses</taxon>
        <taxon>Riboviria</taxon>
        <taxon>Orthornavirae</taxon>
        <taxon>Negarnaviricota</taxon>
        <taxon>Polyploviricotina</taxon>
        <taxon>Insthoviricetes</taxon>
        <taxon>Articulavirales</taxon>
        <taxon>Orthomyxoviridae</taxon>
        <taxon>Alphainfluenzavirus</taxon>
        <taxon>Alphainfluenzavirus influenzae</taxon>
        <taxon>Influenza A virus</taxon>
    </lineage>
</organism>
<evidence type="ECO:0000255" key="1">
    <source>
        <dbReference type="HAMAP-Rule" id="MF_04070"/>
    </source>
</evidence>
<evidence type="ECO:0000256" key="2">
    <source>
        <dbReference type="SAM" id="MobiDB-lite"/>
    </source>
</evidence>
<organismHost>
    <name type="scientific">Aves</name>
    <dbReference type="NCBI Taxonomy" id="8782"/>
</organismHost>
<organismHost>
    <name type="scientific">Homo sapiens</name>
    <name type="common">Human</name>
    <dbReference type="NCBI Taxonomy" id="9606"/>
</organismHost>
<organismHost>
    <name type="scientific">Sus scrofa</name>
    <name type="common">Pig</name>
    <dbReference type="NCBI Taxonomy" id="9823"/>
</organismHost>
<protein>
    <recommendedName>
        <fullName evidence="1">Nucleoprotein</fullName>
    </recommendedName>
    <alternativeName>
        <fullName evidence="1">Nucleocapsid protein</fullName>
        <shortName evidence="1">Protein N</shortName>
    </alternativeName>
</protein>
<keyword id="KW-0002">3D-structure</keyword>
<keyword id="KW-0167">Capsid protein</keyword>
<keyword id="KW-1139">Helical capsid protein</keyword>
<keyword id="KW-1048">Host nucleus</keyword>
<keyword id="KW-0945">Host-virus interaction</keyword>
<keyword id="KW-0687">Ribonucleoprotein</keyword>
<keyword id="KW-0694">RNA-binding</keyword>
<keyword id="KW-0543">Viral nucleoprotein</keyword>
<keyword id="KW-1163">Viral penetration into host nucleus</keyword>
<keyword id="KW-0946">Virion</keyword>
<keyword id="KW-1160">Virus entry into host cell</keyword>